<sequence length="233" mass="26175">MAGALSLRCRTGCTGGCEYGHKGKCRDSSLLSKRLSEDSSRHQLLQKWTSMWRSTSEDASVADTEKARLEEAAAAAEERPLVFLCSGCRRPLGDSLSWVTSQEDTNCILLRCVSCNVSVDKEQKLSKREKENGCILETLHCTGCSLNLGYVYRCTPKNLDYKRDLFCLNVEAVESYVLGSSEKQIVSEDKELFNLESRVEIEKSLKQMEDVLQALQMKLWEVESKLSFATCKS</sequence>
<reference key="1">
    <citation type="submission" date="2008-03" db="EMBL/GenBank/DDBJ databases">
        <title>NISC comparative sequencing initiative.</title>
        <authorList>
            <person name="Antonellis A."/>
            <person name="Ayele K."/>
            <person name="Benjamin B."/>
            <person name="Blakesley R.W."/>
            <person name="Boakye A."/>
            <person name="Bouffard G.G."/>
            <person name="Brinkley C."/>
            <person name="Brooks S."/>
            <person name="Chu G."/>
            <person name="Coleman H."/>
            <person name="Engle J."/>
            <person name="Gestole M."/>
            <person name="Greene A."/>
            <person name="Guan X."/>
            <person name="Gupta J."/>
            <person name="Haghighi P."/>
            <person name="Han J."/>
            <person name="Hansen N."/>
            <person name="Ho S.-L."/>
            <person name="Hu P."/>
            <person name="Hunter G."/>
            <person name="Hurle B."/>
            <person name="Idol J.R."/>
            <person name="Kwong P."/>
            <person name="Laric P."/>
            <person name="Larson S."/>
            <person name="Lee-Lin S.-Q."/>
            <person name="Legaspi R."/>
            <person name="Madden M."/>
            <person name="Maduro Q.L."/>
            <person name="Maduro V.B."/>
            <person name="Margulies E.H."/>
            <person name="Masiello C."/>
            <person name="Maskeri B."/>
            <person name="McDowell J."/>
            <person name="Mojidi H.A."/>
            <person name="Mullikin J.C."/>
            <person name="Oestreicher J.S."/>
            <person name="Park M."/>
            <person name="Portnoy M.E."/>
            <person name="Prasad A."/>
            <person name="Puri O."/>
            <person name="Reddix-Dugue N."/>
            <person name="Schandler K."/>
            <person name="Schueler M.G."/>
            <person name="Sison C."/>
            <person name="Stantripop S."/>
            <person name="Stephen E."/>
            <person name="Taye A."/>
            <person name="Thomas J.W."/>
            <person name="Thomas P.J."/>
            <person name="Tsipouri V."/>
            <person name="Ung L."/>
            <person name="Vogt J.L."/>
            <person name="Wetherby K.D."/>
            <person name="Young A."/>
            <person name="Green E.D."/>
        </authorList>
    </citation>
    <scope>NUCLEOTIDE SEQUENCE [LARGE SCALE GENOMIC DNA]</scope>
</reference>
<proteinExistence type="inferred from homology"/>
<organism>
    <name type="scientific">Plecturocebus moloch</name>
    <name type="common">Dusky titi monkey</name>
    <name type="synonym">Callicebus moloch</name>
    <dbReference type="NCBI Taxonomy" id="9523"/>
    <lineage>
        <taxon>Eukaryota</taxon>
        <taxon>Metazoa</taxon>
        <taxon>Chordata</taxon>
        <taxon>Craniata</taxon>
        <taxon>Vertebrata</taxon>
        <taxon>Euteleostomi</taxon>
        <taxon>Mammalia</taxon>
        <taxon>Eutheria</taxon>
        <taxon>Euarchontoglires</taxon>
        <taxon>Primates</taxon>
        <taxon>Haplorrhini</taxon>
        <taxon>Platyrrhini</taxon>
        <taxon>Pitheciidae</taxon>
        <taxon>Callicebinae</taxon>
        <taxon>Plecturocebus</taxon>
    </lineage>
</organism>
<name>MS18A_PLEMO</name>
<comment type="function">
    <text evidence="1">Required for recruitment of CENPA to centromeres and normal chromosome segregation during mitosis.</text>
</comment>
<comment type="subunit">
    <text evidence="1">Homodimer, and heterodimer with OIP5/MIS18B. Identified in a complex containing MIS18A, OIP5/MIS18B, MIS18BP1, RBBP7 and RBBP4.</text>
</comment>
<comment type="subcellular location">
    <subcellularLocation>
        <location evidence="1">Nucleus</location>
    </subcellularLocation>
    <subcellularLocation>
        <location evidence="1">Chromosome</location>
    </subcellularLocation>
    <subcellularLocation>
        <location evidence="1">Chromosome</location>
        <location evidence="1">Centromere</location>
    </subcellularLocation>
    <text evidence="1">Associated with centromeres in interphase cells, from late anaphase to the G1 phase. Not detected on centromeres during earlier phases of mitosis. Associated with chromatin.</text>
</comment>
<comment type="similarity">
    <text evidence="2">Belongs to the mis18 family.</text>
</comment>
<accession>B1MT51</accession>
<evidence type="ECO:0000250" key="1">
    <source>
        <dbReference type="UniProtKB" id="Q9NYP9"/>
    </source>
</evidence>
<evidence type="ECO:0000255" key="2">
    <source>
        <dbReference type="PROSITE-ProRule" id="PRU01129"/>
    </source>
</evidence>
<feature type="chain" id="PRO_0000359880" description="Protein Mis18-alpha">
    <location>
        <begin position="1"/>
        <end position="233"/>
    </location>
</feature>
<feature type="domain" description="Mis18" evidence="2">
    <location>
        <begin position="80"/>
        <end position="178"/>
    </location>
</feature>
<feature type="binding site" evidence="2">
    <location>
        <position position="85"/>
    </location>
    <ligand>
        <name>Zn(2+)</name>
        <dbReference type="ChEBI" id="CHEBI:29105"/>
    </ligand>
</feature>
<feature type="binding site" evidence="2">
    <location>
        <position position="88"/>
    </location>
    <ligand>
        <name>Zn(2+)</name>
        <dbReference type="ChEBI" id="CHEBI:29105"/>
    </ligand>
</feature>
<feature type="binding site" evidence="2">
    <location>
        <position position="141"/>
    </location>
    <ligand>
        <name>Zn(2+)</name>
        <dbReference type="ChEBI" id="CHEBI:29105"/>
    </ligand>
</feature>
<feature type="binding site" evidence="2">
    <location>
        <position position="144"/>
    </location>
    <ligand>
        <name>Zn(2+)</name>
        <dbReference type="ChEBI" id="CHEBI:29105"/>
    </ligand>
</feature>
<feature type="modified residue" description="Phosphoserine" evidence="1">
    <location>
        <position position="36"/>
    </location>
</feature>
<feature type="modified residue" description="Phosphoserine" evidence="1">
    <location>
        <position position="39"/>
    </location>
</feature>
<feature type="modified residue" description="Phosphoserine" evidence="1">
    <location>
        <position position="40"/>
    </location>
</feature>
<feature type="modified residue" description="Phosphoserine" evidence="1">
    <location>
        <position position="233"/>
    </location>
</feature>
<feature type="cross-link" description="Glycyl lysine isopeptide (Lys-Gly) (interchain with G-Cter in SUMO2)" evidence="1">
    <location>
        <position position="162"/>
    </location>
</feature>
<protein>
    <recommendedName>
        <fullName>Protein Mis18-alpha</fullName>
    </recommendedName>
</protein>
<gene>
    <name type="primary">MIS18A</name>
</gene>
<keyword id="KW-0131">Cell cycle</keyword>
<keyword id="KW-0132">Cell division</keyword>
<keyword id="KW-0137">Centromere</keyword>
<keyword id="KW-0158">Chromosome</keyword>
<keyword id="KW-1017">Isopeptide bond</keyword>
<keyword id="KW-0479">Metal-binding</keyword>
<keyword id="KW-0498">Mitosis</keyword>
<keyword id="KW-0539">Nucleus</keyword>
<keyword id="KW-0597">Phosphoprotein</keyword>
<keyword id="KW-0832">Ubl conjugation</keyword>
<keyword id="KW-0862">Zinc</keyword>
<dbReference type="EMBL" id="DP000619">
    <property type="protein sequence ID" value="ACA51046.1"/>
    <property type="molecule type" value="Genomic_DNA"/>
</dbReference>
<dbReference type="SMR" id="B1MT51"/>
<dbReference type="GO" id="GO:0000785">
    <property type="term" value="C:chromatin"/>
    <property type="evidence" value="ECO:0007669"/>
    <property type="project" value="TreeGrafter"/>
</dbReference>
<dbReference type="GO" id="GO:0000775">
    <property type="term" value="C:chromosome, centromeric region"/>
    <property type="evidence" value="ECO:0007669"/>
    <property type="project" value="UniProtKB-SubCell"/>
</dbReference>
<dbReference type="GO" id="GO:0005634">
    <property type="term" value="C:nucleus"/>
    <property type="evidence" value="ECO:0007669"/>
    <property type="project" value="UniProtKB-SubCell"/>
</dbReference>
<dbReference type="GO" id="GO:0046872">
    <property type="term" value="F:metal ion binding"/>
    <property type="evidence" value="ECO:0007669"/>
    <property type="project" value="UniProtKB-KW"/>
</dbReference>
<dbReference type="GO" id="GO:0051301">
    <property type="term" value="P:cell division"/>
    <property type="evidence" value="ECO:0007669"/>
    <property type="project" value="UniProtKB-KW"/>
</dbReference>
<dbReference type="GO" id="GO:0034080">
    <property type="term" value="P:CENP-A containing chromatin assembly"/>
    <property type="evidence" value="ECO:0007669"/>
    <property type="project" value="TreeGrafter"/>
</dbReference>
<dbReference type="GO" id="GO:0007059">
    <property type="term" value="P:chromosome segregation"/>
    <property type="evidence" value="ECO:0007669"/>
    <property type="project" value="TreeGrafter"/>
</dbReference>
<dbReference type="InterPro" id="IPR034752">
    <property type="entry name" value="Mis18"/>
</dbReference>
<dbReference type="InterPro" id="IPR004910">
    <property type="entry name" value="Yippee/Mis18/Cereblon"/>
</dbReference>
<dbReference type="PANTHER" id="PTHR16431">
    <property type="entry name" value="NEUROGENIC PROTEIN MASTERMIND"/>
    <property type="match status" value="1"/>
</dbReference>
<dbReference type="PANTHER" id="PTHR16431:SF2">
    <property type="entry name" value="PROTEIN MIS18-ALPHA"/>
    <property type="match status" value="1"/>
</dbReference>
<dbReference type="Pfam" id="PF03226">
    <property type="entry name" value="Yippee-Mis18"/>
    <property type="match status" value="1"/>
</dbReference>
<dbReference type="PROSITE" id="PS51793">
    <property type="entry name" value="MIS18"/>
    <property type="match status" value="1"/>
</dbReference>